<accession>Q327M2</accession>
<keyword id="KW-0963">Cytoplasm</keyword>
<keyword id="KW-0342">GTP-binding</keyword>
<keyword id="KW-0547">Nucleotide-binding</keyword>
<keyword id="KW-0648">Protein biosynthesis</keyword>
<keyword id="KW-1185">Reference proteome</keyword>
<comment type="function">
    <text evidence="1">Increases the formation of ribosomal termination complexes and stimulates activities of RF-1 and RF-2. It binds guanine nucleotides and has strong preference for UGA stop codons. It may interact directly with the ribosome. The stimulation of RF-1 and RF-2 is significantly reduced by GTP and GDP, but not by GMP.</text>
</comment>
<comment type="subcellular location">
    <subcellularLocation>
        <location evidence="1">Cytoplasm</location>
    </subcellularLocation>
</comment>
<comment type="similarity">
    <text evidence="1">Belongs to the TRAFAC class translation factor GTPase superfamily. Classic translation factor GTPase family. PrfC subfamily.</text>
</comment>
<evidence type="ECO:0000255" key="1">
    <source>
        <dbReference type="HAMAP-Rule" id="MF_00072"/>
    </source>
</evidence>
<proteinExistence type="inferred from homology"/>
<protein>
    <recommendedName>
        <fullName evidence="1">Peptide chain release factor 3</fullName>
        <shortName evidence="1">RF-3</shortName>
    </recommendedName>
</protein>
<organism>
    <name type="scientific">Shigella dysenteriae serotype 1 (strain Sd197)</name>
    <dbReference type="NCBI Taxonomy" id="300267"/>
    <lineage>
        <taxon>Bacteria</taxon>
        <taxon>Pseudomonadati</taxon>
        <taxon>Pseudomonadota</taxon>
        <taxon>Gammaproteobacteria</taxon>
        <taxon>Enterobacterales</taxon>
        <taxon>Enterobacteriaceae</taxon>
        <taxon>Shigella</taxon>
    </lineage>
</organism>
<name>RF3_SHIDS</name>
<feature type="chain" id="PRO_0000242208" description="Peptide chain release factor 3">
    <location>
        <begin position="1"/>
        <end position="529"/>
    </location>
</feature>
<feature type="domain" description="tr-type G">
    <location>
        <begin position="11"/>
        <end position="280"/>
    </location>
</feature>
<feature type="binding site" evidence="1">
    <location>
        <begin position="20"/>
        <end position="27"/>
    </location>
    <ligand>
        <name>GTP</name>
        <dbReference type="ChEBI" id="CHEBI:37565"/>
    </ligand>
</feature>
<feature type="binding site" evidence="1">
    <location>
        <begin position="88"/>
        <end position="92"/>
    </location>
    <ligand>
        <name>GTP</name>
        <dbReference type="ChEBI" id="CHEBI:37565"/>
    </ligand>
</feature>
<feature type="binding site" evidence="1">
    <location>
        <begin position="142"/>
        <end position="145"/>
    </location>
    <ligand>
        <name>GTP</name>
        <dbReference type="ChEBI" id="CHEBI:37565"/>
    </ligand>
</feature>
<sequence length="529" mass="59574">MTLSPYLQEVAKRRTFAIISHPDAGKTTITEKVLLFGQAIQTAGTVKGRGSNQHAKSDWMEMEKQRGISITTSVMQFPYHDCLVNLLDTPGHEDFSEDTYRTLTAVDCCLMVIDAAKGVEDRTRKLMEVTRLRDTPILTFMNKLDRDIRDPMELLDEVENELKIGCAPITWPIGCGKLFKGVYHLYKDETYLYQSGKGHTIQEVRIVKGLNNPDLDAAVGEDLAQQLRDELELVKGASNEFDKELFLAGEITPVFFGTALGNFGVDHMLDGLVEWAPAPMPRQTDTRTVEASEDKFTGFVFKIQANMDPKHRDRVAFMRVVSGKYEKGMKLRQVRTAKDVVISDALTFMAGDRSHVEEAYPGDILGLHNHGTIQIGDTFTQGEMMKFTGIPNFAPELFRRIRLKDPLKQKQLLKGLVQLSEEGAVQVFRPISNNDLIVGAVGVLQFDVVVARLKSEYNVEAVYESVNVATARWVECADAKKFEEFKRKNESQLALDGGDNLAYIATSMVNLRLAQERYPDVQFHQTREH</sequence>
<gene>
    <name evidence="1" type="primary">prfC</name>
    <name type="ordered locus">SDY_4634</name>
</gene>
<reference key="1">
    <citation type="journal article" date="2005" name="Nucleic Acids Res.">
        <title>Genome dynamics and diversity of Shigella species, the etiologic agents of bacillary dysentery.</title>
        <authorList>
            <person name="Yang F."/>
            <person name="Yang J."/>
            <person name="Zhang X."/>
            <person name="Chen L."/>
            <person name="Jiang Y."/>
            <person name="Yan Y."/>
            <person name="Tang X."/>
            <person name="Wang J."/>
            <person name="Xiong Z."/>
            <person name="Dong J."/>
            <person name="Xue Y."/>
            <person name="Zhu Y."/>
            <person name="Xu X."/>
            <person name="Sun L."/>
            <person name="Chen S."/>
            <person name="Nie H."/>
            <person name="Peng J."/>
            <person name="Xu J."/>
            <person name="Wang Y."/>
            <person name="Yuan Z."/>
            <person name="Wen Y."/>
            <person name="Yao Z."/>
            <person name="Shen Y."/>
            <person name="Qiang B."/>
            <person name="Hou Y."/>
            <person name="Yu J."/>
            <person name="Jin Q."/>
        </authorList>
    </citation>
    <scope>NUCLEOTIDE SEQUENCE [LARGE SCALE GENOMIC DNA]</scope>
    <source>
        <strain>Sd197</strain>
    </source>
</reference>
<dbReference type="EMBL" id="CP000034">
    <property type="protein sequence ID" value="ABB64483.1"/>
    <property type="molecule type" value="Genomic_DNA"/>
</dbReference>
<dbReference type="RefSeq" id="WP_000175940.1">
    <property type="nucleotide sequence ID" value="NC_007606.1"/>
</dbReference>
<dbReference type="RefSeq" id="YP_405974.1">
    <property type="nucleotide sequence ID" value="NC_007606.1"/>
</dbReference>
<dbReference type="SMR" id="Q327M2"/>
<dbReference type="STRING" id="300267.SDY_4634"/>
<dbReference type="EnsemblBacteria" id="ABB64483">
    <property type="protein sequence ID" value="ABB64483"/>
    <property type="gene ID" value="SDY_4634"/>
</dbReference>
<dbReference type="KEGG" id="sdy:SDY_4634"/>
<dbReference type="PATRIC" id="fig|300267.13.peg.5492"/>
<dbReference type="HOGENOM" id="CLU_002794_2_1_6"/>
<dbReference type="Proteomes" id="UP000002716">
    <property type="component" value="Chromosome"/>
</dbReference>
<dbReference type="GO" id="GO:0005829">
    <property type="term" value="C:cytosol"/>
    <property type="evidence" value="ECO:0007669"/>
    <property type="project" value="TreeGrafter"/>
</dbReference>
<dbReference type="GO" id="GO:0005525">
    <property type="term" value="F:GTP binding"/>
    <property type="evidence" value="ECO:0007669"/>
    <property type="project" value="UniProtKB-UniRule"/>
</dbReference>
<dbReference type="GO" id="GO:0003924">
    <property type="term" value="F:GTPase activity"/>
    <property type="evidence" value="ECO:0007669"/>
    <property type="project" value="InterPro"/>
</dbReference>
<dbReference type="GO" id="GO:0097216">
    <property type="term" value="F:guanosine tetraphosphate binding"/>
    <property type="evidence" value="ECO:0007669"/>
    <property type="project" value="UniProtKB-ARBA"/>
</dbReference>
<dbReference type="GO" id="GO:0016150">
    <property type="term" value="F:translation release factor activity, codon nonspecific"/>
    <property type="evidence" value="ECO:0007669"/>
    <property type="project" value="TreeGrafter"/>
</dbReference>
<dbReference type="GO" id="GO:0016149">
    <property type="term" value="F:translation release factor activity, codon specific"/>
    <property type="evidence" value="ECO:0007669"/>
    <property type="project" value="UniProtKB-UniRule"/>
</dbReference>
<dbReference type="GO" id="GO:0006449">
    <property type="term" value="P:regulation of translational termination"/>
    <property type="evidence" value="ECO:0007669"/>
    <property type="project" value="UniProtKB-UniRule"/>
</dbReference>
<dbReference type="CDD" id="cd04169">
    <property type="entry name" value="RF3"/>
    <property type="match status" value="1"/>
</dbReference>
<dbReference type="CDD" id="cd03689">
    <property type="entry name" value="RF3_II"/>
    <property type="match status" value="1"/>
</dbReference>
<dbReference type="CDD" id="cd16259">
    <property type="entry name" value="RF3_III"/>
    <property type="match status" value="1"/>
</dbReference>
<dbReference type="FunFam" id="2.40.30.10:FF:000040">
    <property type="entry name" value="Peptide chain release factor 3"/>
    <property type="match status" value="1"/>
</dbReference>
<dbReference type="FunFam" id="3.30.70.3280:FF:000001">
    <property type="entry name" value="Peptide chain release factor 3"/>
    <property type="match status" value="1"/>
</dbReference>
<dbReference type="FunFam" id="3.40.50.300:FF:000184">
    <property type="entry name" value="Peptide chain release factor 3"/>
    <property type="match status" value="1"/>
</dbReference>
<dbReference type="FunFam" id="3.40.50.300:FF:000253">
    <property type="entry name" value="Peptide chain release factor 3"/>
    <property type="match status" value="1"/>
</dbReference>
<dbReference type="Gene3D" id="3.40.50.300">
    <property type="entry name" value="P-loop containing nucleotide triphosphate hydrolases"/>
    <property type="match status" value="3"/>
</dbReference>
<dbReference type="Gene3D" id="3.30.70.3280">
    <property type="entry name" value="Peptide chain release factor 3, domain III"/>
    <property type="match status" value="1"/>
</dbReference>
<dbReference type="HAMAP" id="MF_00072">
    <property type="entry name" value="Rel_fac_3"/>
    <property type="match status" value="1"/>
</dbReference>
<dbReference type="InterPro" id="IPR053905">
    <property type="entry name" value="EF-G-like_DII"/>
</dbReference>
<dbReference type="InterPro" id="IPR035647">
    <property type="entry name" value="EFG_III/V"/>
</dbReference>
<dbReference type="InterPro" id="IPR031157">
    <property type="entry name" value="G_TR_CS"/>
</dbReference>
<dbReference type="InterPro" id="IPR027417">
    <property type="entry name" value="P-loop_NTPase"/>
</dbReference>
<dbReference type="InterPro" id="IPR004548">
    <property type="entry name" value="PrfC"/>
</dbReference>
<dbReference type="InterPro" id="IPR032090">
    <property type="entry name" value="RF3_C"/>
</dbReference>
<dbReference type="InterPro" id="IPR038467">
    <property type="entry name" value="RF3_dom_3_sf"/>
</dbReference>
<dbReference type="InterPro" id="IPR041732">
    <property type="entry name" value="RF3_GTP-bd"/>
</dbReference>
<dbReference type="InterPro" id="IPR005225">
    <property type="entry name" value="Small_GTP-bd"/>
</dbReference>
<dbReference type="InterPro" id="IPR000795">
    <property type="entry name" value="T_Tr_GTP-bd_dom"/>
</dbReference>
<dbReference type="InterPro" id="IPR009000">
    <property type="entry name" value="Transl_B-barrel_sf"/>
</dbReference>
<dbReference type="NCBIfam" id="TIGR00503">
    <property type="entry name" value="prfC"/>
    <property type="match status" value="1"/>
</dbReference>
<dbReference type="NCBIfam" id="NF001964">
    <property type="entry name" value="PRK00741.1"/>
    <property type="match status" value="1"/>
</dbReference>
<dbReference type="NCBIfam" id="TIGR00231">
    <property type="entry name" value="small_GTP"/>
    <property type="match status" value="1"/>
</dbReference>
<dbReference type="PANTHER" id="PTHR43556">
    <property type="entry name" value="PEPTIDE CHAIN RELEASE FACTOR RF3"/>
    <property type="match status" value="1"/>
</dbReference>
<dbReference type="PANTHER" id="PTHR43556:SF2">
    <property type="entry name" value="PEPTIDE CHAIN RELEASE FACTOR RF3"/>
    <property type="match status" value="1"/>
</dbReference>
<dbReference type="Pfam" id="PF22042">
    <property type="entry name" value="EF-G_D2"/>
    <property type="match status" value="1"/>
</dbReference>
<dbReference type="Pfam" id="PF00009">
    <property type="entry name" value="GTP_EFTU"/>
    <property type="match status" value="1"/>
</dbReference>
<dbReference type="Pfam" id="PF16658">
    <property type="entry name" value="RF3_C"/>
    <property type="match status" value="1"/>
</dbReference>
<dbReference type="PRINTS" id="PR00315">
    <property type="entry name" value="ELONGATNFCT"/>
</dbReference>
<dbReference type="SUPFAM" id="SSF54980">
    <property type="entry name" value="EF-G C-terminal domain-like"/>
    <property type="match status" value="1"/>
</dbReference>
<dbReference type="SUPFAM" id="SSF52540">
    <property type="entry name" value="P-loop containing nucleoside triphosphate hydrolases"/>
    <property type="match status" value="1"/>
</dbReference>
<dbReference type="SUPFAM" id="SSF50447">
    <property type="entry name" value="Translation proteins"/>
    <property type="match status" value="1"/>
</dbReference>
<dbReference type="PROSITE" id="PS00301">
    <property type="entry name" value="G_TR_1"/>
    <property type="match status" value="1"/>
</dbReference>
<dbReference type="PROSITE" id="PS51722">
    <property type="entry name" value="G_TR_2"/>
    <property type="match status" value="1"/>
</dbReference>